<name>RUVA_DEIRA</name>
<proteinExistence type="inferred from homology"/>
<organism>
    <name type="scientific">Deinococcus radiodurans (strain ATCC 13939 / DSM 20539 / JCM 16871 / CCUG 27074 / LMG 4051 / NBRC 15346 / NCIMB 9279 / VKM B-1422 / R1)</name>
    <dbReference type="NCBI Taxonomy" id="243230"/>
    <lineage>
        <taxon>Bacteria</taxon>
        <taxon>Thermotogati</taxon>
        <taxon>Deinococcota</taxon>
        <taxon>Deinococci</taxon>
        <taxon>Deinococcales</taxon>
        <taxon>Deinococcaceae</taxon>
        <taxon>Deinococcus</taxon>
    </lineage>
</organism>
<evidence type="ECO:0000255" key="1">
    <source>
        <dbReference type="HAMAP-Rule" id="MF_00031"/>
    </source>
</evidence>
<dbReference type="EMBL" id="AE000513">
    <property type="protein sequence ID" value="AAF10840.1"/>
    <property type="molecule type" value="Genomic_DNA"/>
</dbReference>
<dbReference type="PIR" id="C75417">
    <property type="entry name" value="C75417"/>
</dbReference>
<dbReference type="RefSeq" id="NP_294998.1">
    <property type="nucleotide sequence ID" value="NC_001263.1"/>
</dbReference>
<dbReference type="RefSeq" id="WP_010887917.1">
    <property type="nucleotide sequence ID" value="NC_001263.1"/>
</dbReference>
<dbReference type="SMR" id="Q9RUV7"/>
<dbReference type="FunCoup" id="Q9RUV7">
    <property type="interactions" value="312"/>
</dbReference>
<dbReference type="STRING" id="243230.DR_1274"/>
<dbReference type="PaxDb" id="243230-DR_1274"/>
<dbReference type="EnsemblBacteria" id="AAF10840">
    <property type="protein sequence ID" value="AAF10840"/>
    <property type="gene ID" value="DR_1274"/>
</dbReference>
<dbReference type="GeneID" id="69517522"/>
<dbReference type="KEGG" id="dra:DR_1274"/>
<dbReference type="PATRIC" id="fig|243230.17.peg.1470"/>
<dbReference type="eggNOG" id="COG0632">
    <property type="taxonomic scope" value="Bacteria"/>
</dbReference>
<dbReference type="HOGENOM" id="CLU_087936_2_1_0"/>
<dbReference type="InParanoid" id="Q9RUV7"/>
<dbReference type="OrthoDB" id="5293449at2"/>
<dbReference type="Proteomes" id="UP000002524">
    <property type="component" value="Chromosome 1"/>
</dbReference>
<dbReference type="GO" id="GO:0005737">
    <property type="term" value="C:cytoplasm"/>
    <property type="evidence" value="ECO:0007669"/>
    <property type="project" value="UniProtKB-SubCell"/>
</dbReference>
<dbReference type="GO" id="GO:0009379">
    <property type="term" value="C:Holliday junction helicase complex"/>
    <property type="evidence" value="ECO:0007669"/>
    <property type="project" value="InterPro"/>
</dbReference>
<dbReference type="GO" id="GO:0048476">
    <property type="term" value="C:Holliday junction resolvase complex"/>
    <property type="evidence" value="ECO:0007669"/>
    <property type="project" value="UniProtKB-UniRule"/>
</dbReference>
<dbReference type="GO" id="GO:0005524">
    <property type="term" value="F:ATP binding"/>
    <property type="evidence" value="ECO:0007669"/>
    <property type="project" value="InterPro"/>
</dbReference>
<dbReference type="GO" id="GO:0000400">
    <property type="term" value="F:four-way junction DNA binding"/>
    <property type="evidence" value="ECO:0007669"/>
    <property type="project" value="UniProtKB-UniRule"/>
</dbReference>
<dbReference type="GO" id="GO:0009378">
    <property type="term" value="F:four-way junction helicase activity"/>
    <property type="evidence" value="ECO:0007669"/>
    <property type="project" value="InterPro"/>
</dbReference>
<dbReference type="GO" id="GO:0006310">
    <property type="term" value="P:DNA recombination"/>
    <property type="evidence" value="ECO:0007669"/>
    <property type="project" value="UniProtKB-UniRule"/>
</dbReference>
<dbReference type="GO" id="GO:0006281">
    <property type="term" value="P:DNA repair"/>
    <property type="evidence" value="ECO:0007669"/>
    <property type="project" value="UniProtKB-UniRule"/>
</dbReference>
<dbReference type="CDD" id="cd00080">
    <property type="entry name" value="H3TH_StructSpec-5'-nucleases"/>
    <property type="match status" value="1"/>
</dbReference>
<dbReference type="CDD" id="cd14332">
    <property type="entry name" value="UBA_RuvA_C"/>
    <property type="match status" value="1"/>
</dbReference>
<dbReference type="Gene3D" id="1.10.150.20">
    <property type="entry name" value="5' to 3' exonuclease, C-terminal subdomain"/>
    <property type="match status" value="1"/>
</dbReference>
<dbReference type="Gene3D" id="1.10.8.10">
    <property type="entry name" value="DNA helicase RuvA subunit, C-terminal domain"/>
    <property type="match status" value="1"/>
</dbReference>
<dbReference type="Gene3D" id="2.40.50.140">
    <property type="entry name" value="Nucleic acid-binding proteins"/>
    <property type="match status" value="1"/>
</dbReference>
<dbReference type="HAMAP" id="MF_00031">
    <property type="entry name" value="DNA_HJ_migration_RuvA"/>
    <property type="match status" value="1"/>
</dbReference>
<dbReference type="InterPro" id="IPR013849">
    <property type="entry name" value="DNA_helicase_Holl-junc_RuvA_I"/>
</dbReference>
<dbReference type="InterPro" id="IPR003583">
    <property type="entry name" value="Hlx-hairpin-Hlx_DNA-bd_motif"/>
</dbReference>
<dbReference type="InterPro" id="IPR012340">
    <property type="entry name" value="NA-bd_OB-fold"/>
</dbReference>
<dbReference type="InterPro" id="IPR000085">
    <property type="entry name" value="RuvA"/>
</dbReference>
<dbReference type="InterPro" id="IPR010994">
    <property type="entry name" value="RuvA_2-like"/>
</dbReference>
<dbReference type="InterPro" id="IPR011114">
    <property type="entry name" value="RuvA_C"/>
</dbReference>
<dbReference type="InterPro" id="IPR036267">
    <property type="entry name" value="RuvA_C_sf"/>
</dbReference>
<dbReference type="NCBIfam" id="TIGR00084">
    <property type="entry name" value="ruvA"/>
    <property type="match status" value="1"/>
</dbReference>
<dbReference type="Pfam" id="PF14520">
    <property type="entry name" value="HHH_5"/>
    <property type="match status" value="1"/>
</dbReference>
<dbReference type="Pfam" id="PF07499">
    <property type="entry name" value="RuvA_C"/>
    <property type="match status" value="1"/>
</dbReference>
<dbReference type="Pfam" id="PF01330">
    <property type="entry name" value="RuvA_N"/>
    <property type="match status" value="1"/>
</dbReference>
<dbReference type="SMART" id="SM00278">
    <property type="entry name" value="HhH1"/>
    <property type="match status" value="2"/>
</dbReference>
<dbReference type="SUPFAM" id="SSF46929">
    <property type="entry name" value="DNA helicase RuvA subunit, C-terminal domain"/>
    <property type="match status" value="1"/>
</dbReference>
<dbReference type="SUPFAM" id="SSF50249">
    <property type="entry name" value="Nucleic acid-binding proteins"/>
    <property type="match status" value="1"/>
</dbReference>
<dbReference type="SUPFAM" id="SSF47781">
    <property type="entry name" value="RuvA domain 2-like"/>
    <property type="match status" value="1"/>
</dbReference>
<keyword id="KW-0963">Cytoplasm</keyword>
<keyword id="KW-0227">DNA damage</keyword>
<keyword id="KW-0233">DNA recombination</keyword>
<keyword id="KW-0234">DNA repair</keyword>
<keyword id="KW-0238">DNA-binding</keyword>
<keyword id="KW-1185">Reference proteome</keyword>
<gene>
    <name evidence="1" type="primary">ruvA</name>
    <name type="ordered locus">DR_1274</name>
</gene>
<sequence length="201" mass="20482">MIAYLSGVVREVREGSAVVVAGGVGYEVQCPAGMLARLKPGEAAEFSTRFIVREDAQLLFGFPDADHLKLFDLLTSVSGVGPKLGLALLSAMPVSALAAGLIGGDVKLLSSVSGVGKKTAERLALELSSKVPEHLAAAASGAAGGKRPARVSSTAGHDAVDALLALGFREAQVRAAVAELLGADPEASADTLIRKALGRLR</sequence>
<feature type="chain" id="PRO_0000094628" description="Holliday junction branch migration complex subunit RuvA">
    <location>
        <begin position="1"/>
        <end position="201"/>
    </location>
</feature>
<feature type="region of interest" description="Domain I" evidence="1">
    <location>
        <begin position="1"/>
        <end position="63"/>
    </location>
</feature>
<feature type="region of interest" description="Domain II" evidence="1">
    <location>
        <begin position="64"/>
        <end position="142"/>
    </location>
</feature>
<feature type="region of interest" description="Flexible linker" evidence="1">
    <location>
        <begin position="143"/>
        <end position="150"/>
    </location>
</feature>
<feature type="region of interest" description="Domain III" evidence="1">
    <location>
        <begin position="151"/>
        <end position="201"/>
    </location>
</feature>
<comment type="function">
    <text evidence="1">The RuvA-RuvB-RuvC complex processes Holliday junction (HJ) DNA during genetic recombination and DNA repair, while the RuvA-RuvB complex plays an important role in the rescue of blocked DNA replication forks via replication fork reversal (RFR). RuvA specifically binds to HJ cruciform DNA, conferring on it an open structure. The RuvB hexamer acts as an ATP-dependent pump, pulling dsDNA into and through the RuvAB complex. HJ branch migration allows RuvC to scan DNA until it finds its consensus sequence, where it cleaves and resolves the cruciform DNA.</text>
</comment>
<comment type="subunit">
    <text evidence="1">Homotetramer. Forms an RuvA(8)-RuvB(12)-Holliday junction (HJ) complex. HJ DNA is sandwiched between 2 RuvA tetramers; dsDNA enters through RuvA and exits via RuvB. An RuvB hexamer assembles on each DNA strand where it exits the tetramer. Each RuvB hexamer is contacted by two RuvA subunits (via domain III) on 2 adjacent RuvB subunits; this complex drives branch migration. In the full resolvosome a probable DNA-RuvA(4)-RuvB(12)-RuvC(2) complex forms which resolves the HJ.</text>
</comment>
<comment type="subcellular location">
    <subcellularLocation>
        <location evidence="1">Cytoplasm</location>
    </subcellularLocation>
</comment>
<comment type="domain">
    <text evidence="1">Has three domains with a flexible linker between the domains II and III and assumes an 'L' shape. Domain III is highly mobile and contacts RuvB.</text>
</comment>
<comment type="similarity">
    <text evidence="1">Belongs to the RuvA family.</text>
</comment>
<accession>Q9RUV7</accession>
<protein>
    <recommendedName>
        <fullName evidence="1">Holliday junction branch migration complex subunit RuvA</fullName>
    </recommendedName>
</protein>
<reference key="1">
    <citation type="journal article" date="1999" name="Science">
        <title>Genome sequence of the radioresistant bacterium Deinococcus radiodurans R1.</title>
        <authorList>
            <person name="White O."/>
            <person name="Eisen J.A."/>
            <person name="Heidelberg J.F."/>
            <person name="Hickey E.K."/>
            <person name="Peterson J.D."/>
            <person name="Dodson R.J."/>
            <person name="Haft D.H."/>
            <person name="Gwinn M.L."/>
            <person name="Nelson W.C."/>
            <person name="Richardson D.L."/>
            <person name="Moffat K.S."/>
            <person name="Qin H."/>
            <person name="Jiang L."/>
            <person name="Pamphile W."/>
            <person name="Crosby M."/>
            <person name="Shen M."/>
            <person name="Vamathevan J.J."/>
            <person name="Lam P."/>
            <person name="McDonald L.A."/>
            <person name="Utterback T.R."/>
            <person name="Zalewski C."/>
            <person name="Makarova K.S."/>
            <person name="Aravind L."/>
            <person name="Daly M.J."/>
            <person name="Minton K.W."/>
            <person name="Fleischmann R.D."/>
            <person name="Ketchum K.A."/>
            <person name="Nelson K.E."/>
            <person name="Salzberg S.L."/>
            <person name="Smith H.O."/>
            <person name="Venter J.C."/>
            <person name="Fraser C.M."/>
        </authorList>
    </citation>
    <scope>NUCLEOTIDE SEQUENCE [LARGE SCALE GENOMIC DNA]</scope>
    <source>
        <strain>ATCC 13939 / DSM 20539 / JCM 16871 / CCUG 27074 / LMG 4051 / NBRC 15346 / NCIMB 9279 / VKM B-1422 / R1</strain>
    </source>
</reference>